<sequence length="83" mass="8829">MPYSRDITKFITATEPEVGLPLLALQRSKSVIGIILLVISLLLIFIGIIILSVSSHTTAGSVLVVLSLILGGGGFFLIYKDNS</sequence>
<reference key="1">
    <citation type="submission" date="2003-03" db="EMBL/GenBank/DDBJ databases">
        <title>African swine fever virus genomes.</title>
        <authorList>
            <person name="Kutish G.F."/>
            <person name="Rock D.L."/>
        </authorList>
    </citation>
    <scope>NUCLEOTIDE SEQUENCE [LARGE SCALE GENOMIC DNA]</scope>
</reference>
<feature type="chain" id="PRO_0000373745" description="Transmembrane protein EP84R">
    <location>
        <begin position="1"/>
        <end position="83"/>
    </location>
</feature>
<feature type="transmembrane region" description="Helical" evidence="2">
    <location>
        <begin position="31"/>
        <end position="51"/>
    </location>
</feature>
<feature type="transmembrane region" description="Helical" evidence="2">
    <location>
        <begin position="59"/>
        <end position="79"/>
    </location>
</feature>
<evidence type="ECO:0000250" key="1">
    <source>
        <dbReference type="UniProtKB" id="Q07383"/>
    </source>
</evidence>
<evidence type="ECO:0000255" key="2"/>
<evidence type="ECO:0000305" key="3"/>
<comment type="subcellular location">
    <subcellularLocation>
        <location evidence="1">Virion membrane</location>
    </subcellularLocation>
</comment>
<comment type="induction">
    <text evidence="3">Expressed in the late phase of the viral replicative cycle.</text>
</comment>
<comment type="similarity">
    <text evidence="3">Belongs to the asfivirus EP84R family.</text>
</comment>
<organismHost>
    <name type="scientific">Ornithodoros</name>
    <name type="common">relapsing fever ticks</name>
    <dbReference type="NCBI Taxonomy" id="6937"/>
</organismHost>
<organismHost>
    <name type="scientific">Phacochoerus aethiopicus</name>
    <name type="common">Warthog</name>
    <dbReference type="NCBI Taxonomy" id="85517"/>
</organismHost>
<organismHost>
    <name type="scientific">Phacochoerus africanus</name>
    <name type="common">Warthog</name>
    <dbReference type="NCBI Taxonomy" id="41426"/>
</organismHost>
<organismHost>
    <name type="scientific">Potamochoerus larvatus</name>
    <name type="common">Bushpig</name>
    <dbReference type="NCBI Taxonomy" id="273792"/>
</organismHost>
<organismHost>
    <name type="scientific">Sus scrofa</name>
    <name type="common">Pig</name>
    <dbReference type="NCBI Taxonomy" id="9823"/>
</organismHost>
<dbReference type="EMBL" id="AY261360">
    <property type="status" value="NOT_ANNOTATED_CDS"/>
    <property type="molecule type" value="Genomic_DNA"/>
</dbReference>
<dbReference type="SMR" id="P0CAL4"/>
<dbReference type="Proteomes" id="UP000000861">
    <property type="component" value="Segment"/>
</dbReference>
<dbReference type="GO" id="GO:0016020">
    <property type="term" value="C:membrane"/>
    <property type="evidence" value="ECO:0007669"/>
    <property type="project" value="UniProtKB-KW"/>
</dbReference>
<dbReference type="GO" id="GO:0055036">
    <property type="term" value="C:virion membrane"/>
    <property type="evidence" value="ECO:0007669"/>
    <property type="project" value="UniProtKB-SubCell"/>
</dbReference>
<proteinExistence type="inferred from homology"/>
<gene>
    <name type="ordered locus">Ken-066</name>
</gene>
<organism>
    <name type="scientific">African swine fever virus (isolate Pig/Kenya/KEN-50/1950)</name>
    <name type="common">ASFV</name>
    <dbReference type="NCBI Taxonomy" id="561445"/>
    <lineage>
        <taxon>Viruses</taxon>
        <taxon>Varidnaviria</taxon>
        <taxon>Bamfordvirae</taxon>
        <taxon>Nucleocytoviricota</taxon>
        <taxon>Pokkesviricetes</taxon>
        <taxon>Asfuvirales</taxon>
        <taxon>Asfarviridae</taxon>
        <taxon>Asfivirus</taxon>
        <taxon>African swine fever virus</taxon>
    </lineage>
</organism>
<keyword id="KW-0426">Late protein</keyword>
<keyword id="KW-0472">Membrane</keyword>
<keyword id="KW-0812">Transmembrane</keyword>
<keyword id="KW-1133">Transmembrane helix</keyword>
<keyword id="KW-0946">Virion</keyword>
<protein>
    <recommendedName>
        <fullName>Transmembrane protein EP84R</fullName>
        <shortName>pEP84R</shortName>
    </recommendedName>
</protein>
<name>VF84_ASFK5</name>
<accession>P0CAL4</accession>